<gene>
    <name evidence="1" type="primary">tatB</name>
    <name type="ordered locus">MS0501</name>
</gene>
<proteinExistence type="inferred from homology"/>
<name>TATB_MANSM</name>
<dbReference type="EMBL" id="AE016827">
    <property type="protein sequence ID" value="AAU37108.1"/>
    <property type="molecule type" value="Genomic_DNA"/>
</dbReference>
<dbReference type="RefSeq" id="WP_011199680.1">
    <property type="nucleotide sequence ID" value="NC_006300.1"/>
</dbReference>
<dbReference type="SMR" id="Q65VA2"/>
<dbReference type="STRING" id="221988.MS0501"/>
<dbReference type="KEGG" id="msu:MS0501"/>
<dbReference type="eggNOG" id="COG1826">
    <property type="taxonomic scope" value="Bacteria"/>
</dbReference>
<dbReference type="HOGENOM" id="CLU_086034_1_0_6"/>
<dbReference type="OrthoDB" id="9816005at2"/>
<dbReference type="Proteomes" id="UP000000607">
    <property type="component" value="Chromosome"/>
</dbReference>
<dbReference type="GO" id="GO:0033281">
    <property type="term" value="C:TAT protein transport complex"/>
    <property type="evidence" value="ECO:0007669"/>
    <property type="project" value="UniProtKB-UniRule"/>
</dbReference>
<dbReference type="GO" id="GO:0008320">
    <property type="term" value="F:protein transmembrane transporter activity"/>
    <property type="evidence" value="ECO:0007669"/>
    <property type="project" value="UniProtKB-UniRule"/>
</dbReference>
<dbReference type="GO" id="GO:0043953">
    <property type="term" value="P:protein transport by the Tat complex"/>
    <property type="evidence" value="ECO:0007669"/>
    <property type="project" value="UniProtKB-UniRule"/>
</dbReference>
<dbReference type="Gene3D" id="1.20.5.3310">
    <property type="match status" value="1"/>
</dbReference>
<dbReference type="HAMAP" id="MF_00237">
    <property type="entry name" value="TatB"/>
    <property type="match status" value="1"/>
</dbReference>
<dbReference type="InterPro" id="IPR018448">
    <property type="entry name" value="TatB"/>
</dbReference>
<dbReference type="NCBIfam" id="TIGR01410">
    <property type="entry name" value="tatB"/>
    <property type="match status" value="1"/>
</dbReference>
<dbReference type="PANTHER" id="PTHR33162">
    <property type="entry name" value="SEC-INDEPENDENT PROTEIN TRANSLOCASE PROTEIN TATA, CHLOROPLASTIC"/>
    <property type="match status" value="1"/>
</dbReference>
<dbReference type="PANTHER" id="PTHR33162:SF1">
    <property type="entry name" value="SEC-INDEPENDENT PROTEIN TRANSLOCASE PROTEIN TATA, CHLOROPLASTIC"/>
    <property type="match status" value="1"/>
</dbReference>
<dbReference type="PRINTS" id="PR01506">
    <property type="entry name" value="TATBPROTEIN"/>
</dbReference>
<evidence type="ECO:0000255" key="1">
    <source>
        <dbReference type="HAMAP-Rule" id="MF_00237"/>
    </source>
</evidence>
<evidence type="ECO:0000256" key="2">
    <source>
        <dbReference type="SAM" id="MobiDB-lite"/>
    </source>
</evidence>
<keyword id="KW-0997">Cell inner membrane</keyword>
<keyword id="KW-1003">Cell membrane</keyword>
<keyword id="KW-0472">Membrane</keyword>
<keyword id="KW-0653">Protein transport</keyword>
<keyword id="KW-0811">Translocation</keyword>
<keyword id="KW-0812">Transmembrane</keyword>
<keyword id="KW-1133">Transmembrane helix</keyword>
<keyword id="KW-0813">Transport</keyword>
<accession>Q65VA2</accession>
<feature type="chain" id="PRO_0000301180" description="Sec-independent protein translocase protein TatB">
    <location>
        <begin position="1"/>
        <end position="204"/>
    </location>
</feature>
<feature type="transmembrane region" description="Helical" evidence="1">
    <location>
        <begin position="1"/>
        <end position="21"/>
    </location>
</feature>
<feature type="region of interest" description="Disordered" evidence="2">
    <location>
        <begin position="154"/>
        <end position="204"/>
    </location>
</feature>
<feature type="compositionally biased region" description="Polar residues" evidence="2">
    <location>
        <begin position="154"/>
        <end position="166"/>
    </location>
</feature>
<protein>
    <recommendedName>
        <fullName evidence="1">Sec-independent protein translocase protein TatB</fullName>
    </recommendedName>
</protein>
<sequence>MFDIGFSELLLIFIVGLVVLGPKRLPVAIRTVMGWVRTIRGLAANVQNELAQELKLQELQESIKKAENLNLKNLSPDLAKTVEELKASAEKMKADLDKAAAETNTTIDEQIQILREENAQTQSNDVATSDTVEKSIADEFSIKNDENPTALSSVVSSVDSIQNGQSDLELDAQAEVDRQLAAMMDKYAPPDDVAENPISTEKTS</sequence>
<organism>
    <name type="scientific">Mannheimia succiniciproducens (strain KCTC 0769BP / MBEL55E)</name>
    <dbReference type="NCBI Taxonomy" id="221988"/>
    <lineage>
        <taxon>Bacteria</taxon>
        <taxon>Pseudomonadati</taxon>
        <taxon>Pseudomonadota</taxon>
        <taxon>Gammaproteobacteria</taxon>
        <taxon>Pasteurellales</taxon>
        <taxon>Pasteurellaceae</taxon>
        <taxon>Basfia</taxon>
    </lineage>
</organism>
<comment type="function">
    <text evidence="1">Part of the twin-arginine translocation (Tat) system that transports large folded proteins containing a characteristic twin-arginine motif in their signal peptide across membranes. Together with TatC, TatB is part of a receptor directly interacting with Tat signal peptides. TatB may form an oligomeric binding site that transiently accommodates folded Tat precursor proteins before their translocation.</text>
</comment>
<comment type="subunit">
    <text evidence="1">The Tat system comprises two distinct complexes: a TatABC complex, containing multiple copies of TatA, TatB and TatC subunits, and a separate TatA complex, containing only TatA subunits. Substrates initially bind to the TatABC complex, which probably triggers association of the separate TatA complex to form the active translocon.</text>
</comment>
<comment type="subcellular location">
    <subcellularLocation>
        <location evidence="1">Cell inner membrane</location>
        <topology evidence="1">Single-pass membrane protein</topology>
    </subcellularLocation>
</comment>
<comment type="similarity">
    <text evidence="1">Belongs to the TatB family.</text>
</comment>
<reference key="1">
    <citation type="journal article" date="2004" name="Nat. Biotechnol.">
        <title>The genome sequence of the capnophilic rumen bacterium Mannheimia succiniciproducens.</title>
        <authorList>
            <person name="Hong S.H."/>
            <person name="Kim J.S."/>
            <person name="Lee S.Y."/>
            <person name="In Y.H."/>
            <person name="Choi S.S."/>
            <person name="Rih J.-K."/>
            <person name="Kim C.H."/>
            <person name="Jeong H."/>
            <person name="Hur C.G."/>
            <person name="Kim J.J."/>
        </authorList>
    </citation>
    <scope>NUCLEOTIDE SEQUENCE [LARGE SCALE GENOMIC DNA]</scope>
    <source>
        <strain>KCTC 0769BP / MBEL55E</strain>
    </source>
</reference>